<accession>P83286</accession>
<organism>
    <name type="scientific">Canis lupus familiaris</name>
    <name type="common">Dog</name>
    <name type="synonym">Canis familiaris</name>
    <dbReference type="NCBI Taxonomy" id="9615"/>
    <lineage>
        <taxon>Eukaryota</taxon>
        <taxon>Metazoa</taxon>
        <taxon>Chordata</taxon>
        <taxon>Craniata</taxon>
        <taxon>Vertebrata</taxon>
        <taxon>Euteleostomi</taxon>
        <taxon>Mammalia</taxon>
        <taxon>Eutheria</taxon>
        <taxon>Laurasiatheria</taxon>
        <taxon>Carnivora</taxon>
        <taxon>Caniformia</taxon>
        <taxon>Canidae</taxon>
        <taxon>Canis</taxon>
    </lineage>
</organism>
<proteinExistence type="evidence at transcript level"/>
<gene>
    <name type="primary">OPTC</name>
    <name type="synonym">OPT</name>
</gene>
<reference key="1">
    <citation type="journal article" date="2002" name="Gene">
        <title>Cloning and characterization of opticin cDNA: evaluation as a candidate for canine oculo-skeletal dysplasia.</title>
        <authorList>
            <person name="Pellegrini B."/>
            <person name="Acland G.M."/>
            <person name="Ray J."/>
        </authorList>
    </citation>
    <scope>NUCLEOTIDE SEQUENCE [MRNA]</scope>
    <scope>TISSUE SPECIFICITY</scope>
    <source>
        <strain>Labrador retriever</strain>
        <strain>Samoyed</strain>
        <tissue>Retina</tissue>
    </source>
</reference>
<dbReference type="EMBL" id="AY048585">
    <property type="protein sequence ID" value="AAL05430.1"/>
    <property type="molecule type" value="mRNA"/>
</dbReference>
<dbReference type="RefSeq" id="NP_001003056.1">
    <property type="nucleotide sequence ID" value="NM_001003056.1"/>
</dbReference>
<dbReference type="SMR" id="P83286"/>
<dbReference type="STRING" id="9615.ENSCAFP00000013921"/>
<dbReference type="PaxDb" id="9612-ENSCAFP00000013921"/>
<dbReference type="GeneID" id="403591"/>
<dbReference type="KEGG" id="cfa:403591"/>
<dbReference type="CTD" id="26254"/>
<dbReference type="eggNOG" id="KOG0619">
    <property type="taxonomic scope" value="Eukaryota"/>
</dbReference>
<dbReference type="InParanoid" id="P83286"/>
<dbReference type="OrthoDB" id="676979at2759"/>
<dbReference type="Proteomes" id="UP000002254">
    <property type="component" value="Unplaced"/>
</dbReference>
<dbReference type="Proteomes" id="UP000694429">
    <property type="component" value="Unplaced"/>
</dbReference>
<dbReference type="Proteomes" id="UP000694542">
    <property type="component" value="Unplaced"/>
</dbReference>
<dbReference type="Proteomes" id="UP000805418">
    <property type="component" value="Unplaced"/>
</dbReference>
<dbReference type="GO" id="GO:0031012">
    <property type="term" value="C:extracellular matrix"/>
    <property type="evidence" value="ECO:0000250"/>
    <property type="project" value="UniProtKB"/>
</dbReference>
<dbReference type="GO" id="GO:0005576">
    <property type="term" value="C:extracellular region"/>
    <property type="evidence" value="ECO:0007669"/>
    <property type="project" value="UniProtKB-KW"/>
</dbReference>
<dbReference type="GO" id="GO:0061975">
    <property type="term" value="P:articular cartilage development"/>
    <property type="evidence" value="ECO:0000318"/>
    <property type="project" value="GO_Central"/>
</dbReference>
<dbReference type="GO" id="GO:0060348">
    <property type="term" value="P:bone development"/>
    <property type="evidence" value="ECO:0000318"/>
    <property type="project" value="GO_Central"/>
</dbReference>
<dbReference type="GO" id="GO:0030199">
    <property type="term" value="P:collagen fibril organization"/>
    <property type="evidence" value="ECO:0000250"/>
    <property type="project" value="UniProtKB"/>
</dbReference>
<dbReference type="Gene3D" id="3.80.10.10">
    <property type="entry name" value="Ribonuclease Inhibitor"/>
    <property type="match status" value="1"/>
</dbReference>
<dbReference type="InterPro" id="IPR001611">
    <property type="entry name" value="Leu-rich_rpt"/>
</dbReference>
<dbReference type="InterPro" id="IPR003591">
    <property type="entry name" value="Leu-rich_rpt_typical-subtyp"/>
</dbReference>
<dbReference type="InterPro" id="IPR032675">
    <property type="entry name" value="LRR_dom_sf"/>
</dbReference>
<dbReference type="InterPro" id="IPR000372">
    <property type="entry name" value="LRRNT"/>
</dbReference>
<dbReference type="InterPro" id="IPR043547">
    <property type="entry name" value="Mimecan/Epiphycan/Opticin"/>
</dbReference>
<dbReference type="PANTHER" id="PTHR46269">
    <property type="entry name" value="EPIPHYCAN-RELATED"/>
    <property type="match status" value="1"/>
</dbReference>
<dbReference type="PANTHER" id="PTHR46269:SF4">
    <property type="entry name" value="OPTICIN"/>
    <property type="match status" value="1"/>
</dbReference>
<dbReference type="Pfam" id="PF13855">
    <property type="entry name" value="LRR_8"/>
    <property type="match status" value="1"/>
</dbReference>
<dbReference type="SMART" id="SM00369">
    <property type="entry name" value="LRR_TYP"/>
    <property type="match status" value="4"/>
</dbReference>
<dbReference type="SMART" id="SM00013">
    <property type="entry name" value="LRRNT"/>
    <property type="match status" value="1"/>
</dbReference>
<dbReference type="SUPFAM" id="SSF52058">
    <property type="entry name" value="L domain-like"/>
    <property type="match status" value="1"/>
</dbReference>
<dbReference type="PROSITE" id="PS51450">
    <property type="entry name" value="LRR"/>
    <property type="match status" value="4"/>
</dbReference>
<protein>
    <recommendedName>
        <fullName>Opticin</fullName>
    </recommendedName>
    <alternativeName>
        <fullName>Oculoglycan</fullName>
    </alternativeName>
</protein>
<evidence type="ECO:0000250" key="1"/>
<evidence type="ECO:0000250" key="2">
    <source>
        <dbReference type="UniProtKB" id="P58874"/>
    </source>
</evidence>
<evidence type="ECO:0000250" key="3">
    <source>
        <dbReference type="UniProtKB" id="Q920A0"/>
    </source>
</evidence>
<evidence type="ECO:0000250" key="4">
    <source>
        <dbReference type="UniProtKB" id="Q9UBM4"/>
    </source>
</evidence>
<evidence type="ECO:0000255" key="5"/>
<evidence type="ECO:0000269" key="6">
    <source>
    </source>
</evidence>
<evidence type="ECO:0000305" key="7"/>
<comment type="function">
    <text evidence="2 3">Inhibits angiogenesis in the vitreous humor of the eye, and therefore represses neovascularization (By similarity). Binds collagen fibrils (By similarity). May be involved in collagen fiber organization via regulation of other members of the small leucine-rich repeat proteoglycan superfamily (By similarity).</text>
</comment>
<comment type="subunit">
    <text evidence="2">Homodimer.</text>
</comment>
<comment type="subcellular location">
    <subcellularLocation>
        <location evidence="2">Secreted</location>
        <location evidence="2">Extracellular space</location>
        <location evidence="2">Extracellular matrix</location>
    </subcellularLocation>
</comment>
<comment type="tissue specificity">
    <text evidence="6">Ocular tissues, cartilage, ligament, skin, muscle and testes.</text>
</comment>
<comment type="PTM">
    <text evidence="7">O-glycosylated.</text>
</comment>
<comment type="PTM">
    <text evidence="2 4">Proteolytically cleaved by MMP1, MMP2, MMP3, MMP7, MMP8, MMP9, ADAMTS4, and ADAMTS5 (By similarity). Proteolytically cleaved by MMP13 (By similarity).</text>
</comment>
<comment type="PTM">
    <text evidence="4">Sulfated on tyrosine residues.</text>
</comment>
<comment type="similarity">
    <text evidence="7">Belongs to the small leucine-rich proteoglycan (SLRP) family. SLRP class III subfamily.</text>
</comment>
<feature type="signal peptide" evidence="1">
    <location>
        <begin position="1"/>
        <end position="19"/>
    </location>
</feature>
<feature type="chain" id="PRO_0000032764" description="Opticin">
    <location>
        <begin position="20"/>
        <end position="327"/>
    </location>
</feature>
<feature type="domain" description="LRRNT">
    <location>
        <begin position="111"/>
        <end position="148"/>
    </location>
</feature>
<feature type="repeat" description="LRR 1">
    <location>
        <begin position="149"/>
        <end position="170"/>
    </location>
</feature>
<feature type="repeat" description="LRR 2">
    <location>
        <begin position="173"/>
        <end position="194"/>
    </location>
</feature>
<feature type="repeat" description="LRR 3">
    <location>
        <begin position="197"/>
        <end position="218"/>
    </location>
</feature>
<feature type="repeat" description="LRR 4">
    <location>
        <begin position="219"/>
        <end position="237"/>
    </location>
</feature>
<feature type="repeat" description="LRR 5">
    <location>
        <begin position="243"/>
        <end position="263"/>
    </location>
</feature>
<feature type="repeat" description="LRR 6">
    <location>
        <begin position="264"/>
        <end position="285"/>
    </location>
</feature>
<feature type="repeat" description="LRR 7">
    <location>
        <begin position="295"/>
        <end position="315"/>
    </location>
</feature>
<feature type="site" description="Cleavage; by MMP7" evidence="4">
    <location>
        <begin position="20"/>
        <end position="21"/>
    </location>
</feature>
<feature type="site" description="Cleavage; by MMP13" evidence="2">
    <location>
        <begin position="110"/>
        <end position="111"/>
    </location>
</feature>
<feature type="modified residue" description="Sulfotyrosine" evidence="5">
    <location>
        <position position="61"/>
    </location>
</feature>
<feature type="modified residue" description="Sulfotyrosine" evidence="5">
    <location>
        <position position="67"/>
    </location>
</feature>
<feature type="disulfide bond" evidence="1">
    <location>
        <begin position="284"/>
        <end position="317"/>
    </location>
</feature>
<name>OPT_CANLF</name>
<sequence>MKLPAFLSLLALVLLEAGTASLPKERKRRDEMHGEGDSYVVLGNYVLGPDNYDEVIDLSDYEGLMDYGDQLPEAKVTNLAPPTGISSAQSTMTPRTLSLKPTMIRPTELGVLGSPNSHGLPTCLICVCLGSSVYCDDADLENIPPLPKTTTYLYARFNRIRRIRAGDFKGLTKLKRIDLSSNSISSIDDDALRLLPALQDLILPENQLAALPALPPAIEVLDARHNQLQSSGIQPEALRALEKLQFLYLADNLLDSIPGPLPPSLRSLHLQNNLIETMQTDAFCDPEEHKHSRRWLEDIRLDGNPINLGLFPSAYFCLPRLPTGHCC</sequence>
<keyword id="KW-1015">Disulfide bond</keyword>
<keyword id="KW-0272">Extracellular matrix</keyword>
<keyword id="KW-0325">Glycoprotein</keyword>
<keyword id="KW-0433">Leucine-rich repeat</keyword>
<keyword id="KW-1185">Reference proteome</keyword>
<keyword id="KW-0677">Repeat</keyword>
<keyword id="KW-0964">Secreted</keyword>
<keyword id="KW-0732">Signal</keyword>
<keyword id="KW-0765">Sulfation</keyword>